<reference key="1">
    <citation type="journal article" date="2008" name="Proc. Natl. Acad. Sci. U.S.A.">
        <title>The genome of Cyanothece 51142, a unicellular diazotrophic cyanobacterium important in the marine nitrogen cycle.</title>
        <authorList>
            <person name="Welsh E.A."/>
            <person name="Liberton M."/>
            <person name="Stoeckel J."/>
            <person name="Loh T."/>
            <person name="Elvitigala T."/>
            <person name="Wang C."/>
            <person name="Wollam A."/>
            <person name="Fulton R.S."/>
            <person name="Clifton S.W."/>
            <person name="Jacobs J.M."/>
            <person name="Aurora R."/>
            <person name="Ghosh B.K."/>
            <person name="Sherman L.A."/>
            <person name="Smith R.D."/>
            <person name="Wilson R.K."/>
            <person name="Pakrasi H.B."/>
        </authorList>
    </citation>
    <scope>NUCLEOTIDE SEQUENCE [LARGE SCALE GENOMIC DNA]</scope>
    <source>
        <strain>ATCC 51142 / BH68</strain>
    </source>
</reference>
<comment type="function">
    <text evidence="1">Catalyzes the NADPH-dependent reduction of N-acetyl-5-glutamyl phosphate to yield N-acetyl-L-glutamate 5-semialdehyde.</text>
</comment>
<comment type="catalytic activity">
    <reaction evidence="1">
        <text>N-acetyl-L-glutamate 5-semialdehyde + phosphate + NADP(+) = N-acetyl-L-glutamyl 5-phosphate + NADPH + H(+)</text>
        <dbReference type="Rhea" id="RHEA:21588"/>
        <dbReference type="ChEBI" id="CHEBI:15378"/>
        <dbReference type="ChEBI" id="CHEBI:29123"/>
        <dbReference type="ChEBI" id="CHEBI:43474"/>
        <dbReference type="ChEBI" id="CHEBI:57783"/>
        <dbReference type="ChEBI" id="CHEBI:57936"/>
        <dbReference type="ChEBI" id="CHEBI:58349"/>
        <dbReference type="EC" id="1.2.1.38"/>
    </reaction>
</comment>
<comment type="pathway">
    <text evidence="1">Amino-acid biosynthesis; L-arginine biosynthesis; N(2)-acetyl-L-ornithine from L-glutamate: step 3/4.</text>
</comment>
<comment type="subcellular location">
    <subcellularLocation>
        <location evidence="1">Cytoplasm</location>
    </subcellularLocation>
</comment>
<comment type="similarity">
    <text evidence="1">Belongs to the NAGSA dehydrogenase family. Type 1 subfamily.</text>
</comment>
<evidence type="ECO:0000255" key="1">
    <source>
        <dbReference type="HAMAP-Rule" id="MF_00150"/>
    </source>
</evidence>
<dbReference type="EC" id="1.2.1.38" evidence="1"/>
<dbReference type="EMBL" id="CP000806">
    <property type="protein sequence ID" value="ACB49416.1"/>
    <property type="molecule type" value="Genomic_DNA"/>
</dbReference>
<dbReference type="RefSeq" id="WP_009543134.1">
    <property type="nucleotide sequence ID" value="NC_010546.1"/>
</dbReference>
<dbReference type="SMR" id="B1WYI6"/>
<dbReference type="STRING" id="43989.cce_0064"/>
<dbReference type="KEGG" id="cyt:cce_0064"/>
<dbReference type="eggNOG" id="COG0002">
    <property type="taxonomic scope" value="Bacteria"/>
</dbReference>
<dbReference type="HOGENOM" id="CLU_006384_0_1_3"/>
<dbReference type="OrthoDB" id="9801289at2"/>
<dbReference type="UniPathway" id="UPA00068">
    <property type="reaction ID" value="UER00108"/>
</dbReference>
<dbReference type="Proteomes" id="UP000001203">
    <property type="component" value="Chromosome circular"/>
</dbReference>
<dbReference type="GO" id="GO:0005737">
    <property type="term" value="C:cytoplasm"/>
    <property type="evidence" value="ECO:0007669"/>
    <property type="project" value="UniProtKB-SubCell"/>
</dbReference>
<dbReference type="GO" id="GO:0003942">
    <property type="term" value="F:N-acetyl-gamma-glutamyl-phosphate reductase activity"/>
    <property type="evidence" value="ECO:0007669"/>
    <property type="project" value="UniProtKB-UniRule"/>
</dbReference>
<dbReference type="GO" id="GO:0051287">
    <property type="term" value="F:NAD binding"/>
    <property type="evidence" value="ECO:0007669"/>
    <property type="project" value="InterPro"/>
</dbReference>
<dbReference type="GO" id="GO:0070401">
    <property type="term" value="F:NADP+ binding"/>
    <property type="evidence" value="ECO:0007669"/>
    <property type="project" value="InterPro"/>
</dbReference>
<dbReference type="GO" id="GO:0006526">
    <property type="term" value="P:L-arginine biosynthetic process"/>
    <property type="evidence" value="ECO:0007669"/>
    <property type="project" value="UniProtKB-UniRule"/>
</dbReference>
<dbReference type="CDD" id="cd23934">
    <property type="entry name" value="AGPR_1_C"/>
    <property type="match status" value="1"/>
</dbReference>
<dbReference type="CDD" id="cd17895">
    <property type="entry name" value="AGPR_1_N"/>
    <property type="match status" value="1"/>
</dbReference>
<dbReference type="FunFam" id="3.30.360.10:FF:000014">
    <property type="entry name" value="N-acetyl-gamma-glutamyl-phosphate reductase"/>
    <property type="match status" value="1"/>
</dbReference>
<dbReference type="Gene3D" id="3.30.360.10">
    <property type="entry name" value="Dihydrodipicolinate Reductase, domain 2"/>
    <property type="match status" value="1"/>
</dbReference>
<dbReference type="Gene3D" id="3.40.50.720">
    <property type="entry name" value="NAD(P)-binding Rossmann-like Domain"/>
    <property type="match status" value="1"/>
</dbReference>
<dbReference type="HAMAP" id="MF_00150">
    <property type="entry name" value="ArgC_type1"/>
    <property type="match status" value="1"/>
</dbReference>
<dbReference type="InterPro" id="IPR023013">
    <property type="entry name" value="AGPR_AS"/>
</dbReference>
<dbReference type="InterPro" id="IPR000706">
    <property type="entry name" value="AGPR_type-1"/>
</dbReference>
<dbReference type="InterPro" id="IPR036291">
    <property type="entry name" value="NAD(P)-bd_dom_sf"/>
</dbReference>
<dbReference type="InterPro" id="IPR050085">
    <property type="entry name" value="NAGSA_dehydrogenase"/>
</dbReference>
<dbReference type="InterPro" id="IPR000534">
    <property type="entry name" value="Semialdehyde_DH_NAD-bd"/>
</dbReference>
<dbReference type="NCBIfam" id="TIGR01850">
    <property type="entry name" value="argC"/>
    <property type="match status" value="1"/>
</dbReference>
<dbReference type="PANTHER" id="PTHR32338:SF10">
    <property type="entry name" value="N-ACETYL-GAMMA-GLUTAMYL-PHOSPHATE REDUCTASE, CHLOROPLASTIC-RELATED"/>
    <property type="match status" value="1"/>
</dbReference>
<dbReference type="PANTHER" id="PTHR32338">
    <property type="entry name" value="N-ACETYL-GAMMA-GLUTAMYL-PHOSPHATE REDUCTASE, CHLOROPLASTIC-RELATED-RELATED"/>
    <property type="match status" value="1"/>
</dbReference>
<dbReference type="Pfam" id="PF01118">
    <property type="entry name" value="Semialdhyde_dh"/>
    <property type="match status" value="1"/>
</dbReference>
<dbReference type="Pfam" id="PF22698">
    <property type="entry name" value="Semialdhyde_dhC_1"/>
    <property type="match status" value="1"/>
</dbReference>
<dbReference type="SMART" id="SM00859">
    <property type="entry name" value="Semialdhyde_dh"/>
    <property type="match status" value="1"/>
</dbReference>
<dbReference type="SUPFAM" id="SSF55347">
    <property type="entry name" value="Glyceraldehyde-3-phosphate dehydrogenase-like, C-terminal domain"/>
    <property type="match status" value="1"/>
</dbReference>
<dbReference type="SUPFAM" id="SSF51735">
    <property type="entry name" value="NAD(P)-binding Rossmann-fold domains"/>
    <property type="match status" value="1"/>
</dbReference>
<dbReference type="PROSITE" id="PS01224">
    <property type="entry name" value="ARGC"/>
    <property type="match status" value="1"/>
</dbReference>
<protein>
    <recommendedName>
        <fullName evidence="1">N-acetyl-gamma-glutamyl-phosphate reductase</fullName>
        <shortName evidence="1">AGPR</shortName>
        <ecNumber evidence="1">1.2.1.38</ecNumber>
    </recommendedName>
    <alternativeName>
        <fullName evidence="1">N-acetyl-glutamate semialdehyde dehydrogenase</fullName>
        <shortName evidence="1">NAGSA dehydrogenase</shortName>
    </alternativeName>
</protein>
<organism>
    <name type="scientific">Crocosphaera subtropica (strain ATCC 51142 / BH68)</name>
    <name type="common">Cyanothece sp. (strain ATCC 51142)</name>
    <dbReference type="NCBI Taxonomy" id="43989"/>
    <lineage>
        <taxon>Bacteria</taxon>
        <taxon>Bacillati</taxon>
        <taxon>Cyanobacteriota</taxon>
        <taxon>Cyanophyceae</taxon>
        <taxon>Oscillatoriophycideae</taxon>
        <taxon>Chroococcales</taxon>
        <taxon>Aphanothecaceae</taxon>
        <taxon>Crocosphaera</taxon>
        <taxon>Crocosphaera subtropica</taxon>
    </lineage>
</organism>
<proteinExistence type="inferred from homology"/>
<accession>B1WYI6</accession>
<keyword id="KW-0028">Amino-acid biosynthesis</keyword>
<keyword id="KW-0055">Arginine biosynthesis</keyword>
<keyword id="KW-0963">Cytoplasm</keyword>
<keyword id="KW-0521">NADP</keyword>
<keyword id="KW-0560">Oxidoreductase</keyword>
<keyword id="KW-1185">Reference proteome</keyword>
<gene>
    <name evidence="1" type="primary">argC</name>
    <name type="ordered locus">cce_0064</name>
</gene>
<feature type="chain" id="PRO_1000096721" description="N-acetyl-gamma-glutamyl-phosphate reductase">
    <location>
        <begin position="1"/>
        <end position="352"/>
    </location>
</feature>
<feature type="active site" evidence="1">
    <location>
        <position position="155"/>
    </location>
</feature>
<name>ARGC_CROS5</name>
<sequence length="352" mass="38088">MGESEKISVGIIGASGYGGVQLVRLLQEHPLVDIVYLGGKGSAGQTYAEIYPHLGHAVDLTIEPIDTEAIASRCQVVFLGLPNGLACDIAPPLIAKGCKVLDLSADYRFKNLETYSSWYNKDRSDLDTAKTAVYGLPELYREEIKSASLIGCPGCYPTASLMALSPLLKQGLILPETTIIDAKSGTSGGGRQAKTHLLLAEAEGSFGAYGVAKHRHTPEIEQISSDLAGHEVKVQFTPHLIPMVRGILSTVYATLRDPGLVREDLLTIYSAFYRSSPFVKILPNGLYPQTKWACGTNLCYLGIETDPRTDRVIVLSAIDNLIKGQAGQAVQCLNIMMGWEETLGLPQLCFYP</sequence>